<name>MTLD_ECO45</name>
<organism>
    <name type="scientific">Escherichia coli O45:K1 (strain S88 / ExPEC)</name>
    <dbReference type="NCBI Taxonomy" id="585035"/>
    <lineage>
        <taxon>Bacteria</taxon>
        <taxon>Pseudomonadati</taxon>
        <taxon>Pseudomonadota</taxon>
        <taxon>Gammaproteobacteria</taxon>
        <taxon>Enterobacterales</taxon>
        <taxon>Enterobacteriaceae</taxon>
        <taxon>Escherichia</taxon>
    </lineage>
</organism>
<feature type="chain" id="PRO_1000118654" description="Mannitol-1-phosphate 5-dehydrogenase">
    <location>
        <begin position="1"/>
        <end position="382"/>
    </location>
</feature>
<feature type="binding site" evidence="1">
    <location>
        <begin position="3"/>
        <end position="14"/>
    </location>
    <ligand>
        <name>NAD(+)</name>
        <dbReference type="ChEBI" id="CHEBI:57540"/>
    </ligand>
</feature>
<feature type="modified residue" description="N6-acetyllysine" evidence="1">
    <location>
        <position position="269"/>
    </location>
</feature>
<keyword id="KW-0007">Acetylation</keyword>
<keyword id="KW-0520">NAD</keyword>
<keyword id="KW-0560">Oxidoreductase</keyword>
<keyword id="KW-1185">Reference proteome</keyword>
<proteinExistence type="inferred from homology"/>
<protein>
    <recommendedName>
        <fullName evidence="1">Mannitol-1-phosphate 5-dehydrogenase</fullName>
        <ecNumber evidence="1">1.1.1.17</ecNumber>
    </recommendedName>
</protein>
<evidence type="ECO:0000255" key="1">
    <source>
        <dbReference type="HAMAP-Rule" id="MF_00196"/>
    </source>
</evidence>
<comment type="catalytic activity">
    <reaction evidence="1">
        <text>D-mannitol 1-phosphate + NAD(+) = beta-D-fructose 6-phosphate + NADH + H(+)</text>
        <dbReference type="Rhea" id="RHEA:19661"/>
        <dbReference type="ChEBI" id="CHEBI:15378"/>
        <dbReference type="ChEBI" id="CHEBI:57540"/>
        <dbReference type="ChEBI" id="CHEBI:57634"/>
        <dbReference type="ChEBI" id="CHEBI:57945"/>
        <dbReference type="ChEBI" id="CHEBI:61381"/>
        <dbReference type="EC" id="1.1.1.17"/>
    </reaction>
</comment>
<comment type="similarity">
    <text evidence="1">Belongs to the mannitol dehydrogenase family.</text>
</comment>
<gene>
    <name evidence="1" type="primary">mtlD</name>
    <name type="ordered locus">ECS88_4013</name>
</gene>
<dbReference type="EC" id="1.1.1.17" evidence="1"/>
<dbReference type="EMBL" id="CU928161">
    <property type="protein sequence ID" value="CAR05222.1"/>
    <property type="molecule type" value="Genomic_DNA"/>
</dbReference>
<dbReference type="RefSeq" id="WP_001363068.1">
    <property type="nucleotide sequence ID" value="NC_011742.1"/>
</dbReference>
<dbReference type="SMR" id="B7MFG0"/>
<dbReference type="KEGG" id="ecz:ECS88_4013"/>
<dbReference type="HOGENOM" id="CLU_036089_2_0_6"/>
<dbReference type="Proteomes" id="UP000000747">
    <property type="component" value="Chromosome"/>
</dbReference>
<dbReference type="GO" id="GO:0005829">
    <property type="term" value="C:cytosol"/>
    <property type="evidence" value="ECO:0007669"/>
    <property type="project" value="TreeGrafter"/>
</dbReference>
<dbReference type="GO" id="GO:0008926">
    <property type="term" value="F:mannitol-1-phosphate 5-dehydrogenase activity"/>
    <property type="evidence" value="ECO:0007669"/>
    <property type="project" value="UniProtKB-UniRule"/>
</dbReference>
<dbReference type="GO" id="GO:0019592">
    <property type="term" value="P:mannitol catabolic process"/>
    <property type="evidence" value="ECO:0007669"/>
    <property type="project" value="TreeGrafter"/>
</dbReference>
<dbReference type="FunFam" id="1.10.1040.10:FF:000009">
    <property type="entry name" value="Mannitol-1-phosphate 5-dehydrogenase"/>
    <property type="match status" value="1"/>
</dbReference>
<dbReference type="FunFam" id="3.40.50.720:FF:000075">
    <property type="entry name" value="Mannitol-1-phosphate 5-dehydrogenase"/>
    <property type="match status" value="1"/>
</dbReference>
<dbReference type="Gene3D" id="1.10.1040.10">
    <property type="entry name" value="N-(1-d-carboxylethyl)-l-norvaline Dehydrogenase, domain 2"/>
    <property type="match status" value="1"/>
</dbReference>
<dbReference type="Gene3D" id="3.40.50.720">
    <property type="entry name" value="NAD(P)-binding Rossmann-like Domain"/>
    <property type="match status" value="1"/>
</dbReference>
<dbReference type="HAMAP" id="MF_00196">
    <property type="entry name" value="Mannitol_dehydrog"/>
    <property type="match status" value="1"/>
</dbReference>
<dbReference type="InterPro" id="IPR008927">
    <property type="entry name" value="6-PGluconate_DH-like_C_sf"/>
</dbReference>
<dbReference type="InterPro" id="IPR013328">
    <property type="entry name" value="6PGD_dom2"/>
</dbReference>
<dbReference type="InterPro" id="IPR023028">
    <property type="entry name" value="Mannitol_1_phos_5_DH"/>
</dbReference>
<dbReference type="InterPro" id="IPR000669">
    <property type="entry name" value="Mannitol_DH"/>
</dbReference>
<dbReference type="InterPro" id="IPR013118">
    <property type="entry name" value="Mannitol_DH_C"/>
</dbReference>
<dbReference type="InterPro" id="IPR023027">
    <property type="entry name" value="Mannitol_DH_CS"/>
</dbReference>
<dbReference type="InterPro" id="IPR013131">
    <property type="entry name" value="Mannitol_DH_N"/>
</dbReference>
<dbReference type="InterPro" id="IPR036291">
    <property type="entry name" value="NAD(P)-bd_dom_sf"/>
</dbReference>
<dbReference type="NCBIfam" id="NF002646">
    <property type="entry name" value="PRK02318.1-2"/>
    <property type="match status" value="1"/>
</dbReference>
<dbReference type="NCBIfam" id="NF002647">
    <property type="entry name" value="PRK02318.1-3"/>
    <property type="match status" value="1"/>
</dbReference>
<dbReference type="NCBIfam" id="NF002648">
    <property type="entry name" value="PRK02318.1-4"/>
    <property type="match status" value="1"/>
</dbReference>
<dbReference type="NCBIfam" id="NF002650">
    <property type="entry name" value="PRK02318.2-2"/>
    <property type="match status" value="1"/>
</dbReference>
<dbReference type="NCBIfam" id="NF002652">
    <property type="entry name" value="PRK02318.2-5"/>
    <property type="match status" value="1"/>
</dbReference>
<dbReference type="PANTHER" id="PTHR30524:SF0">
    <property type="entry name" value="ALTRONATE OXIDOREDUCTASE-RELATED"/>
    <property type="match status" value="1"/>
</dbReference>
<dbReference type="PANTHER" id="PTHR30524">
    <property type="entry name" value="MANNITOL-1-PHOSPHATE 5-DEHYDROGENASE"/>
    <property type="match status" value="1"/>
</dbReference>
<dbReference type="Pfam" id="PF01232">
    <property type="entry name" value="Mannitol_dh"/>
    <property type="match status" value="1"/>
</dbReference>
<dbReference type="Pfam" id="PF08125">
    <property type="entry name" value="Mannitol_dh_C"/>
    <property type="match status" value="1"/>
</dbReference>
<dbReference type="PRINTS" id="PR00084">
    <property type="entry name" value="MTLDHDRGNASE"/>
</dbReference>
<dbReference type="SUPFAM" id="SSF48179">
    <property type="entry name" value="6-phosphogluconate dehydrogenase C-terminal domain-like"/>
    <property type="match status" value="1"/>
</dbReference>
<dbReference type="SUPFAM" id="SSF51735">
    <property type="entry name" value="NAD(P)-binding Rossmann-fold domains"/>
    <property type="match status" value="1"/>
</dbReference>
<dbReference type="PROSITE" id="PS00974">
    <property type="entry name" value="MANNITOL_DHGENASE"/>
    <property type="match status" value="1"/>
</dbReference>
<sequence length="382" mass="41213">MKALHFGAGNIGRGFIGKLLADAGIQLTFADVNQVVLDALNARHSYQVHVVGETEQVDTVSGVDAVSSIGDDVVDLIAQVDLVTTAVGPVVLERIAPAIAKGLVKRKEQGNESPLNIIACENMVRGTTQLKGHVMNALPEDAKAWVEEHVGFVDSAVDRIVPPSASATNDPLEVTVETFSEWIVDKTQFKGTLPNIPGMELTDNLMAFVERKLFTLNTGHAITAYLGKLAGHQTIRDAILDEKIRAVVKGAMEESGAVLIKRYDFDADKHAAYIQKILGRFENPYLKDDVERVGRQPLRKLSAGDRLIKPLLGTLEYGLPHKNLIEGIAAAMHFRSEDDPQAQELAALIADKGPQAALAQISGLDANSEVVSEAVTAYKAMQ</sequence>
<reference key="1">
    <citation type="journal article" date="2009" name="PLoS Genet.">
        <title>Organised genome dynamics in the Escherichia coli species results in highly diverse adaptive paths.</title>
        <authorList>
            <person name="Touchon M."/>
            <person name="Hoede C."/>
            <person name="Tenaillon O."/>
            <person name="Barbe V."/>
            <person name="Baeriswyl S."/>
            <person name="Bidet P."/>
            <person name="Bingen E."/>
            <person name="Bonacorsi S."/>
            <person name="Bouchier C."/>
            <person name="Bouvet O."/>
            <person name="Calteau A."/>
            <person name="Chiapello H."/>
            <person name="Clermont O."/>
            <person name="Cruveiller S."/>
            <person name="Danchin A."/>
            <person name="Diard M."/>
            <person name="Dossat C."/>
            <person name="Karoui M.E."/>
            <person name="Frapy E."/>
            <person name="Garry L."/>
            <person name="Ghigo J.M."/>
            <person name="Gilles A.M."/>
            <person name="Johnson J."/>
            <person name="Le Bouguenec C."/>
            <person name="Lescat M."/>
            <person name="Mangenot S."/>
            <person name="Martinez-Jehanne V."/>
            <person name="Matic I."/>
            <person name="Nassif X."/>
            <person name="Oztas S."/>
            <person name="Petit M.A."/>
            <person name="Pichon C."/>
            <person name="Rouy Z."/>
            <person name="Ruf C.S."/>
            <person name="Schneider D."/>
            <person name="Tourret J."/>
            <person name="Vacherie B."/>
            <person name="Vallenet D."/>
            <person name="Medigue C."/>
            <person name="Rocha E.P.C."/>
            <person name="Denamur E."/>
        </authorList>
    </citation>
    <scope>NUCLEOTIDE SEQUENCE [LARGE SCALE GENOMIC DNA]</scope>
    <source>
        <strain>S88 / ExPEC</strain>
    </source>
</reference>
<accession>B7MFG0</accession>